<protein>
    <recommendedName>
        <fullName evidence="7">FAD-linked oxidoreductase afoF</fullName>
        <ecNumber evidence="8">1.-.-.-</ecNumber>
    </recommendedName>
    <alternativeName>
        <fullName evidence="6">Asperfuranone biosynthesis protein B</fullName>
    </alternativeName>
</protein>
<reference key="1">
    <citation type="journal article" date="2005" name="Nature">
        <title>Sequencing of Aspergillus nidulans and comparative analysis with A. fumigatus and A. oryzae.</title>
        <authorList>
            <person name="Galagan J.E."/>
            <person name="Calvo S.E."/>
            <person name="Cuomo C."/>
            <person name="Ma L.-J."/>
            <person name="Wortman J.R."/>
            <person name="Batzoglou S."/>
            <person name="Lee S.-I."/>
            <person name="Bastuerkmen M."/>
            <person name="Spevak C.C."/>
            <person name="Clutterbuck J."/>
            <person name="Kapitonov V."/>
            <person name="Jurka J."/>
            <person name="Scazzocchio C."/>
            <person name="Farman M.L."/>
            <person name="Butler J."/>
            <person name="Purcell S."/>
            <person name="Harris S."/>
            <person name="Braus G.H."/>
            <person name="Draht O."/>
            <person name="Busch S."/>
            <person name="D'Enfert C."/>
            <person name="Bouchier C."/>
            <person name="Goldman G.H."/>
            <person name="Bell-Pedersen D."/>
            <person name="Griffiths-Jones S."/>
            <person name="Doonan J.H."/>
            <person name="Yu J."/>
            <person name="Vienken K."/>
            <person name="Pain A."/>
            <person name="Freitag M."/>
            <person name="Selker E.U."/>
            <person name="Archer D.B."/>
            <person name="Penalva M.A."/>
            <person name="Oakley B.R."/>
            <person name="Momany M."/>
            <person name="Tanaka T."/>
            <person name="Kumagai T."/>
            <person name="Asai K."/>
            <person name="Machida M."/>
            <person name="Nierman W.C."/>
            <person name="Denning D.W."/>
            <person name="Caddick M.X."/>
            <person name="Hynes M."/>
            <person name="Paoletti M."/>
            <person name="Fischer R."/>
            <person name="Miller B.L."/>
            <person name="Dyer P.S."/>
            <person name="Sachs M.S."/>
            <person name="Osmani S.A."/>
            <person name="Birren B.W."/>
        </authorList>
    </citation>
    <scope>NUCLEOTIDE SEQUENCE [LARGE SCALE GENOMIC DNA]</scope>
    <source>
        <strain>FGSC A4 / ATCC 38163 / CBS 112.46 / NRRL 194 / M139</strain>
    </source>
</reference>
<reference key="2">
    <citation type="journal article" date="2009" name="Fungal Genet. Biol.">
        <title>The 2008 update of the Aspergillus nidulans genome annotation: a community effort.</title>
        <authorList>
            <person name="Wortman J.R."/>
            <person name="Gilsenan J.M."/>
            <person name="Joardar V."/>
            <person name="Deegan J."/>
            <person name="Clutterbuck J."/>
            <person name="Andersen M.R."/>
            <person name="Archer D."/>
            <person name="Bencina M."/>
            <person name="Braus G."/>
            <person name="Coutinho P."/>
            <person name="von Dohren H."/>
            <person name="Doonan J."/>
            <person name="Driessen A.J."/>
            <person name="Durek P."/>
            <person name="Espeso E."/>
            <person name="Fekete E."/>
            <person name="Flipphi M."/>
            <person name="Estrada C.G."/>
            <person name="Geysens S."/>
            <person name="Goldman G."/>
            <person name="de Groot P.W."/>
            <person name="Hansen K."/>
            <person name="Harris S.D."/>
            <person name="Heinekamp T."/>
            <person name="Helmstaedt K."/>
            <person name="Henrissat B."/>
            <person name="Hofmann G."/>
            <person name="Homan T."/>
            <person name="Horio T."/>
            <person name="Horiuchi H."/>
            <person name="James S."/>
            <person name="Jones M."/>
            <person name="Karaffa L."/>
            <person name="Karanyi Z."/>
            <person name="Kato M."/>
            <person name="Keller N."/>
            <person name="Kelly D.E."/>
            <person name="Kiel J.A."/>
            <person name="Kim J.M."/>
            <person name="van der Klei I.J."/>
            <person name="Klis F.M."/>
            <person name="Kovalchuk A."/>
            <person name="Krasevec N."/>
            <person name="Kubicek C.P."/>
            <person name="Liu B."/>
            <person name="Maccabe A."/>
            <person name="Meyer V."/>
            <person name="Mirabito P."/>
            <person name="Miskei M."/>
            <person name="Mos M."/>
            <person name="Mullins J."/>
            <person name="Nelson D.R."/>
            <person name="Nielsen J."/>
            <person name="Oakley B.R."/>
            <person name="Osmani S.A."/>
            <person name="Pakula T."/>
            <person name="Paszewski A."/>
            <person name="Paulsen I."/>
            <person name="Pilsyk S."/>
            <person name="Pocsi I."/>
            <person name="Punt P.J."/>
            <person name="Ram A.F."/>
            <person name="Ren Q."/>
            <person name="Robellet X."/>
            <person name="Robson G."/>
            <person name="Seiboth B."/>
            <person name="van Solingen P."/>
            <person name="Specht T."/>
            <person name="Sun J."/>
            <person name="Taheri-Talesh N."/>
            <person name="Takeshita N."/>
            <person name="Ussery D."/>
            <person name="vanKuyk P.A."/>
            <person name="Visser H."/>
            <person name="van de Vondervoort P.J."/>
            <person name="de Vries R.P."/>
            <person name="Walton J."/>
            <person name="Xiang X."/>
            <person name="Xiong Y."/>
            <person name="Zeng A.P."/>
            <person name="Brandt B.W."/>
            <person name="Cornell M.J."/>
            <person name="van den Hondel C.A."/>
            <person name="Visser J."/>
            <person name="Oliver S.G."/>
            <person name="Turner G."/>
        </authorList>
    </citation>
    <scope>GENOME REANNOTATION</scope>
    <source>
        <strain>FGSC A4 / ATCC 38163 / CBS 112.46 / NRRL 194 / M139</strain>
    </source>
</reference>
<reference key="3">
    <citation type="journal article" date="2009" name="J. Am. Chem. Soc.">
        <title>A gene cluster containing two fungal polyketide synthases encodes the biosynthetic pathway for a polyketide, asperfuranone, in Aspergillus nidulans.</title>
        <authorList>
            <person name="Chiang Y.M."/>
            <person name="Szewczyk E."/>
            <person name="Davidson A.D."/>
            <person name="Keller N."/>
            <person name="Oakley B.R."/>
            <person name="Wang C.C."/>
        </authorList>
    </citation>
    <scope>FUNCTION</scope>
    <scope>DISRUPTION PHENOTYPE</scope>
</reference>
<reference key="4">
    <citation type="journal article" date="2010" name="Basic Clin. Pharmacol. Toxicol.">
        <title>Asperfuranone from Aspergillus nidulans inhibits proliferation of human non-small cell lung cancer A549 cells via blocking cell cycle progression and inducing apoptosis.</title>
        <authorList>
            <person name="Wang C.C."/>
            <person name="Chiang Y.M."/>
            <person name="Praseuth M.B."/>
            <person name="Kuo P.L."/>
            <person name="Liang H.L."/>
            <person name="Hsu Y.L."/>
        </authorList>
    </citation>
    <scope>BIOTECHNOLOGY</scope>
</reference>
<comment type="function">
    <text evidence="4">FAD-linked oxidoreductase; part of the gene cluster that mediates the biosynthesis of asperfuranone, a probable antitumor agent (PubMed:19199437). The polyketide synthase afoG is responsible for producing the 3,5-dimethyloctadienone moiety from acetyl-CoA, three malonyl-CoA, and two S-adenosyl methionines (SAM) (PubMed:19199437). The 3,5-dimethyloctadienone moiety is then loaded onto the SAT domain of afoE and extended with four malonyl-CoA and one SAM, which leads to the formation of 2,4-dihydroxy-6-(5,7-dimethyl-2-oxo-trans-3-trans-5-nonadienyl)-3-methylbenzaldehyde (compound 2) after reductive release and aldol condensation (PubMed:19199437). AfoD is the next enzyme in the biosynthesis sequence and hydroxylates the side chain at the benzylic position of compound 2 (PubMed:19199437). After benzylic hydroxylation, a furan ring is formed after five-member ring hemiacetal formation and water elimination (PubMed:19199437). AfoF and afoC are proposed to oxidize the R-diketone proton and to reduce the unconjugated carbonyl group, respectively, to generate asperfuranone (PubMed:19199437). Since no intermediates could be isolated from afoF and afoC deletants, the sequence of these two enzymes is not fully understood (PubMed:19199437). Moreover, since afoC deletant still produces a small amount of asperfuranone, other endogenous oxidoreductases might catalyze the same reaction with much less efficiency (PubMed:19199437).</text>
</comment>
<comment type="cofactor">
    <cofactor evidence="8">
        <name>FAD</name>
        <dbReference type="ChEBI" id="CHEBI:57692"/>
    </cofactor>
</comment>
<comment type="induction">
    <text evidence="4">Expression is regulated by the asperfuranone cluster transcription factor afoA (PubMed:19199437).</text>
</comment>
<comment type="disruption phenotype">
    <text evidence="4">Completely abolishes the production of asperfuranone (PubMed:19199437).</text>
</comment>
<comment type="biotechnology">
    <text evidence="5">Asperfuranone provides anti-proliferative activity in human non-small cell lung cancer cells (PubMed:20148857).</text>
</comment>
<comment type="similarity">
    <text evidence="7">Belongs to the oxygen-dependent FAD-linked oxidoreductase family.</text>
</comment>
<proteinExistence type="evidence at protein level"/>
<name>AFOF_EMENI</name>
<organism>
    <name type="scientific">Emericella nidulans (strain FGSC A4 / ATCC 38163 / CBS 112.46 / NRRL 194 / M139)</name>
    <name type="common">Aspergillus nidulans</name>
    <dbReference type="NCBI Taxonomy" id="227321"/>
    <lineage>
        <taxon>Eukaryota</taxon>
        <taxon>Fungi</taxon>
        <taxon>Dikarya</taxon>
        <taxon>Ascomycota</taxon>
        <taxon>Pezizomycotina</taxon>
        <taxon>Eurotiomycetes</taxon>
        <taxon>Eurotiomycetidae</taxon>
        <taxon>Eurotiales</taxon>
        <taxon>Aspergillaceae</taxon>
        <taxon>Aspergillus</taxon>
        <taxon>Aspergillus subgen. Nidulantes</taxon>
    </lineage>
</organism>
<feature type="signal peptide" evidence="1">
    <location>
        <begin position="1"/>
        <end position="16"/>
    </location>
</feature>
<feature type="chain" id="PRO_5006966312" description="FAD-linked oxidoreductase afoF" evidence="1">
    <location>
        <begin position="17"/>
        <end position="481"/>
    </location>
</feature>
<feature type="domain" description="FAD-binding PCMH-type" evidence="3">
    <location>
        <begin position="52"/>
        <end position="227"/>
    </location>
</feature>
<feature type="modified residue" description="Pros-8alpha-FAD histidine" evidence="1">
    <location>
        <position position="92"/>
    </location>
</feature>
<feature type="glycosylation site" description="N-linked (GlcNAc...) asparagine" evidence="2">
    <location>
        <position position="82"/>
    </location>
</feature>
<feature type="glycosylation site" description="N-linked (GlcNAc...) asparagine" evidence="2">
    <location>
        <position position="196"/>
    </location>
</feature>
<feature type="glycosylation site" description="N-linked (GlcNAc...) asparagine" evidence="2">
    <location>
        <position position="241"/>
    </location>
</feature>
<feature type="glycosylation site" description="N-linked (GlcNAc...) asparagine" evidence="2">
    <location>
        <position position="276"/>
    </location>
</feature>
<feature type="glycosylation site" description="N-linked (GlcNAc...) asparagine" evidence="2">
    <location>
        <position position="309"/>
    </location>
</feature>
<feature type="glycosylation site" description="N-linked (GlcNAc...) asparagine" evidence="2">
    <location>
        <position position="312"/>
    </location>
</feature>
<feature type="glycosylation site" description="N-linked (GlcNAc...) asparagine" evidence="2">
    <location>
        <position position="376"/>
    </location>
</feature>
<sequence length="481" mass="52262">MRFLLQSITLVAAARAASIDLESLFGPYVSPETEIAEVGDADFDEVVSPRWSEWRPPTWTGAIKPQTEEDLQEIVRIAVANNVSFMATSGGHGTSLIYGTVKGLDINLANFNNVDIDLESNTVTVGAGAKLGDITEPLYKAGKAIQTARGNSPCVGVIGATIGGGIGYETGLFGLGVDALVSVRIITATGELITANETCNSDLLWAIRGAGANFGIITAATFKMFDQPNNGDAVIGTFVYNSSKSLGVFEYLSVLDNVLPPELGVQLSIGYDRTINETLLTVDIKHFAPWATFVDHWEHAEALGPISRNVSNVTLVELYAGLDGPCQTGAYVSGGTVGLGRTDAATMQEVFDDMTAFYEQYPGYLGQSLFQRYANNNTLKTPAHTAVYPWRDTKMFWLHENIFLNPELEAPTNELLVSLREKLHATSGFPADQPHIYVNYAFGDEGPEAWWSKENLPKLSYLKRKWDPKGVFGKGTPIPRF</sequence>
<dbReference type="EC" id="1.-.-.-" evidence="8"/>
<dbReference type="EMBL" id="BN001308">
    <property type="protein sequence ID" value="CBF88293.1"/>
    <property type="molecule type" value="Genomic_DNA"/>
</dbReference>
<dbReference type="EMBL" id="AACD01000015">
    <property type="protein sequence ID" value="EAA65603.1"/>
    <property type="molecule type" value="Genomic_DNA"/>
</dbReference>
<dbReference type="RefSeq" id="XP_658639.1">
    <property type="nucleotide sequence ID" value="XM_653547.1"/>
</dbReference>
<dbReference type="SMR" id="Q5BEJ5"/>
<dbReference type="STRING" id="227321.Q5BEJ5"/>
<dbReference type="GlyCosmos" id="Q5BEJ5">
    <property type="glycosylation" value="7 sites, No reported glycans"/>
</dbReference>
<dbReference type="EnsemblFungi" id="CBF88293">
    <property type="protein sequence ID" value="CBF88293"/>
    <property type="gene ID" value="ANIA_01035"/>
</dbReference>
<dbReference type="KEGG" id="ani:ANIA_01035"/>
<dbReference type="VEuPathDB" id="FungiDB:AN1035"/>
<dbReference type="eggNOG" id="ENOG502SJ3M">
    <property type="taxonomic scope" value="Eukaryota"/>
</dbReference>
<dbReference type="HOGENOM" id="CLU_018354_0_1_1"/>
<dbReference type="InParanoid" id="Q5BEJ5"/>
<dbReference type="OMA" id="WVSPATE"/>
<dbReference type="OrthoDB" id="415825at2759"/>
<dbReference type="Proteomes" id="UP000000560">
    <property type="component" value="Chromosome VIII"/>
</dbReference>
<dbReference type="GO" id="GO:0005576">
    <property type="term" value="C:extracellular region"/>
    <property type="evidence" value="ECO:0000314"/>
    <property type="project" value="AspGD"/>
</dbReference>
<dbReference type="GO" id="GO:0071949">
    <property type="term" value="F:FAD binding"/>
    <property type="evidence" value="ECO:0007669"/>
    <property type="project" value="InterPro"/>
</dbReference>
<dbReference type="GO" id="GO:0016491">
    <property type="term" value="F:oxidoreductase activity"/>
    <property type="evidence" value="ECO:0007669"/>
    <property type="project" value="UniProtKB-KW"/>
</dbReference>
<dbReference type="GO" id="GO:1900554">
    <property type="term" value="P:asperfuranone biosynthetic process"/>
    <property type="evidence" value="ECO:0000315"/>
    <property type="project" value="AspGD"/>
</dbReference>
<dbReference type="Gene3D" id="3.30.465.10">
    <property type="match status" value="1"/>
</dbReference>
<dbReference type="Gene3D" id="3.40.462.20">
    <property type="match status" value="1"/>
</dbReference>
<dbReference type="InterPro" id="IPR012951">
    <property type="entry name" value="BBE"/>
</dbReference>
<dbReference type="InterPro" id="IPR016166">
    <property type="entry name" value="FAD-bd_PCMH"/>
</dbReference>
<dbReference type="InterPro" id="IPR036318">
    <property type="entry name" value="FAD-bd_PCMH-like_sf"/>
</dbReference>
<dbReference type="InterPro" id="IPR016169">
    <property type="entry name" value="FAD-bd_PCMH_sub2"/>
</dbReference>
<dbReference type="InterPro" id="IPR050416">
    <property type="entry name" value="FAD-linked_Oxidoreductase"/>
</dbReference>
<dbReference type="InterPro" id="IPR006094">
    <property type="entry name" value="Oxid_FAD_bind_N"/>
</dbReference>
<dbReference type="PANTHER" id="PTHR42973">
    <property type="entry name" value="BINDING OXIDOREDUCTASE, PUTATIVE (AFU_ORTHOLOGUE AFUA_1G17690)-RELATED"/>
    <property type="match status" value="1"/>
</dbReference>
<dbReference type="PANTHER" id="PTHR42973:SF32">
    <property type="entry name" value="FAD-LINKED OXIDOREDUCTASE AFOF"/>
    <property type="match status" value="1"/>
</dbReference>
<dbReference type="Pfam" id="PF08031">
    <property type="entry name" value="BBE"/>
    <property type="match status" value="1"/>
</dbReference>
<dbReference type="Pfam" id="PF01565">
    <property type="entry name" value="FAD_binding_4"/>
    <property type="match status" value="1"/>
</dbReference>
<dbReference type="SUPFAM" id="SSF56176">
    <property type="entry name" value="FAD-binding/transporter-associated domain-like"/>
    <property type="match status" value="1"/>
</dbReference>
<dbReference type="PROSITE" id="PS51387">
    <property type="entry name" value="FAD_PCMH"/>
    <property type="match status" value="1"/>
</dbReference>
<accession>Q5BEJ5</accession>
<accession>C8VTX8</accession>
<evidence type="ECO:0000255" key="1"/>
<evidence type="ECO:0000255" key="2">
    <source>
        <dbReference type="PROSITE-ProRule" id="PRU00498"/>
    </source>
</evidence>
<evidence type="ECO:0000255" key="3">
    <source>
        <dbReference type="PROSITE-ProRule" id="PRU00718"/>
    </source>
</evidence>
<evidence type="ECO:0000269" key="4">
    <source>
    </source>
</evidence>
<evidence type="ECO:0000269" key="5">
    <source>
    </source>
</evidence>
<evidence type="ECO:0000303" key="6">
    <source>
    </source>
</evidence>
<evidence type="ECO:0000305" key="7"/>
<evidence type="ECO:0000305" key="8">
    <source>
    </source>
</evidence>
<gene>
    <name evidence="6" type="primary">afoF</name>
    <name type="ORF">AN1035</name>
</gene>
<keyword id="KW-0274">FAD</keyword>
<keyword id="KW-0285">Flavoprotein</keyword>
<keyword id="KW-0325">Glycoprotein</keyword>
<keyword id="KW-0560">Oxidoreductase</keyword>
<keyword id="KW-1185">Reference proteome</keyword>
<keyword id="KW-0732">Signal</keyword>